<reference key="1">
    <citation type="journal article" date="1998" name="Virology">
        <title>The complete genomic sequence of the modified vaccinia Ankara strain: comparison with other orthopoxviruses.</title>
        <authorList>
            <person name="Antoine G."/>
            <person name="Scheiflinger F."/>
            <person name="Dorner F."/>
            <person name="Falkner F.G."/>
        </authorList>
    </citation>
    <scope>NUCLEOTIDE SEQUENCE [LARGE SCALE GENOMIC DNA]</scope>
</reference>
<reference key="2">
    <citation type="submission" date="2004-04" db="EMBL/GenBank/DDBJ databases">
        <authorList>
            <person name="Esposito J.J."/>
            <person name="Frace M."/>
            <person name="Sammons S.A."/>
            <person name="Olsen-Rasmussen M.S."/>
            <person name="Osborne J."/>
            <person name="Khristova M."/>
            <person name="Wohlhueter R.M."/>
        </authorList>
    </citation>
    <scope>NUCLEOTIDE SEQUENCE [LARGE SCALE GENOMIC DNA]</scope>
    <source>
        <strain>Isolate Acambis 3000</strain>
    </source>
</reference>
<reference key="3">
    <citation type="journal article" date="2006" name="BMC Struct. Biol.">
        <title>Structure of vaccinia virus thymidine kinase in complex with dTTP: insights for drug design.</title>
        <authorList>
            <person name="El Omari K."/>
            <person name="Solaroli N."/>
            <person name="Karlsson A."/>
            <person name="Balzarini J."/>
            <person name="Stammers D.K."/>
        </authorList>
    </citation>
    <scope>X-RAY CRYSTALLOGRAPHY (3.1 ANGSTROMS) IN COMPLEX WITH ZINC IONS AND TTP</scope>
    <scope>FUNCTION</scope>
    <scope>CATALYTIC ACTIVITY</scope>
    <scope>SUBUNIT</scope>
    <scope>ACTIVE SITE</scope>
    <scope>DISULFIDE BONDS</scope>
</reference>
<protein>
    <recommendedName>
        <fullName>Thymidine kinase</fullName>
        <ecNumber>2.7.1.21</ecNumber>
    </recommendedName>
</protein>
<organismHost>
    <name type="scientific">Homo sapiens</name>
    <name type="common">Human</name>
    <dbReference type="NCBI Taxonomy" id="9606"/>
</organismHost>
<comment type="function">
    <text evidence="2">Phosphorylates thymidine and thymidine analogs, such as azidothymidine (AZT). Part of the salvage pathway for pyrimidine deoxyribonucleotide synthesis.</text>
</comment>
<comment type="catalytic activity">
    <reaction evidence="2">
        <text>thymidine + ATP = dTMP + ADP + H(+)</text>
        <dbReference type="Rhea" id="RHEA:19129"/>
        <dbReference type="ChEBI" id="CHEBI:15378"/>
        <dbReference type="ChEBI" id="CHEBI:17748"/>
        <dbReference type="ChEBI" id="CHEBI:30616"/>
        <dbReference type="ChEBI" id="CHEBI:63528"/>
        <dbReference type="ChEBI" id="CHEBI:456216"/>
        <dbReference type="EC" id="2.7.1.21"/>
    </reaction>
</comment>
<comment type="subunit">
    <text evidence="1">Homotetramer. Two molecules of substrate bind to each enzyme tetramer.</text>
</comment>
<comment type="similarity">
    <text evidence="3">Belongs to the thymidine kinase family.</text>
</comment>
<keyword id="KW-0002">3D-structure</keyword>
<keyword id="KW-0067">ATP-binding</keyword>
<keyword id="KW-1015">Disulfide bond</keyword>
<keyword id="KW-0237">DNA synthesis</keyword>
<keyword id="KW-0418">Kinase</keyword>
<keyword id="KW-0479">Metal-binding</keyword>
<keyword id="KW-0547">Nucleotide-binding</keyword>
<keyword id="KW-0808">Transferase</keyword>
<keyword id="KW-0862">Zinc</keyword>
<organism>
    <name type="scientific">Vaccinia virus (strain Ankara)</name>
    <name type="common">VACV</name>
    <dbReference type="NCBI Taxonomy" id="126794"/>
    <lineage>
        <taxon>Viruses</taxon>
        <taxon>Varidnaviria</taxon>
        <taxon>Bamfordvirae</taxon>
        <taxon>Nucleocytoviricota</taxon>
        <taxon>Pokkesviricetes</taxon>
        <taxon>Chitovirales</taxon>
        <taxon>Poxviridae</taxon>
        <taxon>Chordopoxvirinae</taxon>
        <taxon>Orthopoxvirus</taxon>
        <taxon>Vaccinia virus</taxon>
    </lineage>
</organism>
<sequence length="177" mass="20028">MNGGHIQLIIGPMFSGKSTELIRRVRRYQIAQYKCVTIKYSNDNRYGTGLWTHDKNNFEALEATKLCDVLESITDFSVIGIDEGQFFPDIVEFCERMANEGKIVIVAALDGTFQRKPFNNILNLIPLSEMVVKLTAVCMKCFKEASFSKRLGEETEIEIIGGNDMYQSVCRKCYVGS</sequence>
<dbReference type="EC" id="2.7.1.21"/>
<dbReference type="EMBL" id="U94848">
    <property type="protein sequence ID" value="AAB96503.1"/>
    <property type="molecule type" value="Genomic_DNA"/>
</dbReference>
<dbReference type="EMBL" id="AY603355">
    <property type="protein sequence ID" value="AAT10484.1"/>
    <property type="molecule type" value="Genomic_DNA"/>
</dbReference>
<dbReference type="PIR" id="T37362">
    <property type="entry name" value="T37362"/>
</dbReference>
<dbReference type="PDB" id="2J87">
    <property type="method" value="X-ray"/>
    <property type="resolution" value="3.10 A"/>
    <property type="chains" value="A/B/C/D=1-177"/>
</dbReference>
<dbReference type="PDBsum" id="2J87"/>
<dbReference type="SMR" id="O57203"/>
<dbReference type="BRENDA" id="2.7.1.21">
    <property type="organism ID" value="6591"/>
</dbReference>
<dbReference type="EvolutionaryTrace" id="O57203"/>
<dbReference type="Proteomes" id="UP000159908">
    <property type="component" value="Segment"/>
</dbReference>
<dbReference type="Proteomes" id="UP000172909">
    <property type="component" value="Segment"/>
</dbReference>
<dbReference type="GO" id="GO:0005524">
    <property type="term" value="F:ATP binding"/>
    <property type="evidence" value="ECO:0007669"/>
    <property type="project" value="UniProtKB-KW"/>
</dbReference>
<dbReference type="GO" id="GO:0046872">
    <property type="term" value="F:metal ion binding"/>
    <property type="evidence" value="ECO:0007669"/>
    <property type="project" value="UniProtKB-KW"/>
</dbReference>
<dbReference type="GO" id="GO:0004797">
    <property type="term" value="F:thymidine kinase activity"/>
    <property type="evidence" value="ECO:0007669"/>
    <property type="project" value="UniProtKB-EC"/>
</dbReference>
<dbReference type="GO" id="GO:0071897">
    <property type="term" value="P:DNA biosynthetic process"/>
    <property type="evidence" value="ECO:0007669"/>
    <property type="project" value="UniProtKB-KW"/>
</dbReference>
<dbReference type="GO" id="GO:0046104">
    <property type="term" value="P:thymidine metabolic process"/>
    <property type="evidence" value="ECO:0007669"/>
    <property type="project" value="TreeGrafter"/>
</dbReference>
<dbReference type="FunFam" id="3.30.60.20:FF:000028">
    <property type="entry name" value="Thymidine kinase"/>
    <property type="match status" value="1"/>
</dbReference>
<dbReference type="FunFam" id="3.40.50.300:FF:000761">
    <property type="entry name" value="Thymidine kinase"/>
    <property type="match status" value="1"/>
</dbReference>
<dbReference type="Gene3D" id="3.30.60.20">
    <property type="match status" value="1"/>
</dbReference>
<dbReference type="Gene3D" id="3.40.50.300">
    <property type="entry name" value="P-loop containing nucleotide triphosphate hydrolases"/>
    <property type="match status" value="1"/>
</dbReference>
<dbReference type="InterPro" id="IPR027417">
    <property type="entry name" value="P-loop_NTPase"/>
</dbReference>
<dbReference type="InterPro" id="IPR001267">
    <property type="entry name" value="Thymidine_kinase"/>
</dbReference>
<dbReference type="InterPro" id="IPR020633">
    <property type="entry name" value="Thymidine_kinase_CS"/>
</dbReference>
<dbReference type="PANTHER" id="PTHR11441">
    <property type="entry name" value="THYMIDINE KINASE"/>
    <property type="match status" value="1"/>
</dbReference>
<dbReference type="PANTHER" id="PTHR11441:SF0">
    <property type="entry name" value="THYMIDINE KINASE, CYTOSOLIC"/>
    <property type="match status" value="1"/>
</dbReference>
<dbReference type="Pfam" id="PF00265">
    <property type="entry name" value="TK"/>
    <property type="match status" value="1"/>
</dbReference>
<dbReference type="PIRSF" id="PIRSF035805">
    <property type="entry name" value="TK_cell"/>
    <property type="match status" value="1"/>
</dbReference>
<dbReference type="SUPFAM" id="SSF57716">
    <property type="entry name" value="Glucocorticoid receptor-like (DNA-binding domain)"/>
    <property type="match status" value="1"/>
</dbReference>
<dbReference type="SUPFAM" id="SSF52540">
    <property type="entry name" value="P-loop containing nucleoside triphosphate hydrolases"/>
    <property type="match status" value="1"/>
</dbReference>
<dbReference type="PROSITE" id="PS00603">
    <property type="entry name" value="TK_CELLULAR_TYPE"/>
    <property type="match status" value="1"/>
</dbReference>
<name>KITH_VACCA</name>
<evidence type="ECO:0000250" key="1"/>
<evidence type="ECO:0000269" key="2">
    <source>
    </source>
</evidence>
<evidence type="ECO:0000305" key="3"/>
<evidence type="ECO:0007744" key="4">
    <source>
        <dbReference type="PDB" id="2J87"/>
    </source>
</evidence>
<evidence type="ECO:0007829" key="5">
    <source>
        <dbReference type="PDB" id="2J87"/>
    </source>
</evidence>
<accession>O57203</accession>
<accession>Q6J3E4</accession>
<gene>
    <name type="primary">OPG101</name>
    <name type="synonym">TK</name>
    <name type="ordered locus">MVA086R</name>
    <name type="ordered locus">ACAM3000_MVA_086</name>
    <name type="ORF">J2R</name>
</gene>
<feature type="chain" id="PRO_0000174937" description="Thymidine kinase">
    <location>
        <begin position="1"/>
        <end position="177"/>
    </location>
</feature>
<feature type="active site" description="Proton acceptor" evidence="2 4">
    <location>
        <position position="83"/>
    </location>
</feature>
<feature type="binding site" evidence="2 4">
    <location>
        <begin position="11"/>
        <end position="18"/>
    </location>
    <ligand>
        <name>ATP</name>
        <dbReference type="ChEBI" id="CHEBI:30616"/>
    </ligand>
</feature>
<feature type="binding site" evidence="2 4">
    <location>
        <position position="113"/>
    </location>
    <ligand>
        <name>substrate</name>
    </ligand>
</feature>
<feature type="binding site" evidence="2 4">
    <location>
        <position position="138"/>
    </location>
    <ligand>
        <name>Zn(2+)</name>
        <dbReference type="ChEBI" id="CHEBI:29105"/>
    </ligand>
</feature>
<feature type="binding site" evidence="2 4">
    <location>
        <position position="141"/>
    </location>
    <ligand>
        <name>Zn(2+)</name>
        <dbReference type="ChEBI" id="CHEBI:29105"/>
    </ligand>
</feature>
<feature type="binding site" evidence="2 4">
    <location>
        <begin position="157"/>
        <end position="161"/>
    </location>
    <ligand>
        <name>substrate</name>
    </ligand>
</feature>
<feature type="binding site" evidence="2 4">
    <location>
        <position position="170"/>
    </location>
    <ligand>
        <name>Zn(2+)</name>
        <dbReference type="ChEBI" id="CHEBI:29105"/>
    </ligand>
</feature>
<feature type="binding site" evidence="2 4">
    <location>
        <position position="173"/>
    </location>
    <ligand>
        <name>Zn(2+)</name>
        <dbReference type="ChEBI" id="CHEBI:29105"/>
    </ligand>
</feature>
<feature type="disulfide bond" description="Interchain (with C-173)" evidence="2 4">
    <location>
        <position position="170"/>
    </location>
</feature>
<feature type="disulfide bond" description="Interchain (with C-170)" evidence="2 4">
    <location>
        <position position="173"/>
    </location>
</feature>
<feature type="strand" evidence="5">
    <location>
        <begin position="5"/>
        <end position="10"/>
    </location>
</feature>
<feature type="helix" evidence="5">
    <location>
        <begin position="17"/>
        <end position="29"/>
    </location>
</feature>
<feature type="turn" evidence="5">
    <location>
        <begin position="30"/>
        <end position="32"/>
    </location>
</feature>
<feature type="strand" evidence="5">
    <location>
        <begin position="35"/>
        <end position="40"/>
    </location>
</feature>
<feature type="strand" evidence="5">
    <location>
        <begin position="56"/>
        <end position="58"/>
    </location>
</feature>
<feature type="helix" evidence="5">
    <location>
        <begin position="66"/>
        <end position="69"/>
    </location>
</feature>
<feature type="turn" evidence="5">
    <location>
        <begin position="70"/>
        <end position="72"/>
    </location>
</feature>
<feature type="helix" evidence="5">
    <location>
        <begin position="73"/>
        <end position="75"/>
    </location>
</feature>
<feature type="strand" evidence="5">
    <location>
        <begin position="77"/>
        <end position="82"/>
    </location>
</feature>
<feature type="helix" evidence="5">
    <location>
        <begin position="84"/>
        <end position="86"/>
    </location>
</feature>
<feature type="helix" evidence="5">
    <location>
        <begin position="90"/>
        <end position="99"/>
    </location>
</feature>
<feature type="strand" evidence="5">
    <location>
        <begin position="103"/>
        <end position="107"/>
    </location>
</feature>
<feature type="turn" evidence="5">
    <location>
        <begin position="119"/>
        <end position="121"/>
    </location>
</feature>
<feature type="helix" evidence="5">
    <location>
        <begin position="122"/>
        <end position="126"/>
    </location>
</feature>
<feature type="strand" evidence="5">
    <location>
        <begin position="129"/>
        <end position="133"/>
    </location>
</feature>
<feature type="turn" evidence="5">
    <location>
        <begin position="139"/>
        <end position="141"/>
    </location>
</feature>
<feature type="strand" evidence="5">
    <location>
        <begin position="143"/>
        <end position="145"/>
    </location>
</feature>
<feature type="strand" evidence="5">
    <location>
        <begin position="147"/>
        <end position="153"/>
    </location>
</feature>
<feature type="turn" evidence="5">
    <location>
        <begin position="163"/>
        <end position="165"/>
    </location>
</feature>
<feature type="strand" evidence="5">
    <location>
        <begin position="166"/>
        <end position="169"/>
    </location>
</feature>
<feature type="helix" evidence="5">
    <location>
        <begin position="171"/>
        <end position="174"/>
    </location>
</feature>
<proteinExistence type="evidence at protein level"/>